<reference key="1">
    <citation type="submission" date="2007-05" db="EMBL/GenBank/DDBJ databases">
        <title>Complete sequence of chromosome of Staphylococcus aureus subsp. aureus JH9.</title>
        <authorList>
            <consortium name="US DOE Joint Genome Institute"/>
            <person name="Copeland A."/>
            <person name="Lucas S."/>
            <person name="Lapidus A."/>
            <person name="Barry K."/>
            <person name="Detter J.C."/>
            <person name="Glavina del Rio T."/>
            <person name="Hammon N."/>
            <person name="Israni S."/>
            <person name="Pitluck S."/>
            <person name="Chain P."/>
            <person name="Malfatti S."/>
            <person name="Shin M."/>
            <person name="Vergez L."/>
            <person name="Schmutz J."/>
            <person name="Larimer F."/>
            <person name="Land M."/>
            <person name="Hauser L."/>
            <person name="Kyrpides N."/>
            <person name="Kim E."/>
            <person name="Tomasz A."/>
            <person name="Richardson P."/>
        </authorList>
    </citation>
    <scope>NUCLEOTIDE SEQUENCE [LARGE SCALE GENOMIC DNA]</scope>
    <source>
        <strain>JH9</strain>
    </source>
</reference>
<sequence>MNHIQEAFLNTLKVERNFSEHTLKSYQDDLIQFNQFLEQEHLQLKTFEYRDARNYLSYLYSNHLKRTSVSRKISTLRTFYEYWMTLDENIINPFVQLVHPKKEKYLPQFFYEEEMEALFKTVEEDTSKNLRDRVILELLYATGIRVSELVNIKKQDIDFYANGVTVLGKGSKERFVPFGAYCRQSIENYLEHFKPIQSCNHDFLILNMKGEAITERGVRYVLNDIVKRTAGVSEIHPHKLRHTFATHLLNQGADLRTVQSLLGHVNLSTTGKYTHVSNQQLRKVYLNAHPRAKKENEI</sequence>
<comment type="function">
    <text evidence="1">Site-specific tyrosine recombinase, which acts by catalyzing the cutting and rejoining of the recombining DNA molecules. The XerC-XerD complex is essential to convert dimers of the bacterial chromosome into monomers to permit their segregation at cell division. It also contributes to the segregational stability of plasmids.</text>
</comment>
<comment type="subunit">
    <text evidence="1">Forms a cyclic heterotetrameric complex composed of two molecules of XerC and two molecules of XerD.</text>
</comment>
<comment type="subcellular location">
    <subcellularLocation>
        <location evidence="1">Cytoplasm</location>
    </subcellularLocation>
</comment>
<comment type="similarity">
    <text evidence="1">Belongs to the 'phage' integrase family. XerC subfamily.</text>
</comment>
<accession>A5ISD6</accession>
<gene>
    <name evidence="1" type="primary">xerC</name>
    <name type="ordered locus">SaurJH9_1312</name>
</gene>
<name>XERC_STAA9</name>
<proteinExistence type="inferred from homology"/>
<organism>
    <name type="scientific">Staphylococcus aureus (strain JH9)</name>
    <dbReference type="NCBI Taxonomy" id="359786"/>
    <lineage>
        <taxon>Bacteria</taxon>
        <taxon>Bacillati</taxon>
        <taxon>Bacillota</taxon>
        <taxon>Bacilli</taxon>
        <taxon>Bacillales</taxon>
        <taxon>Staphylococcaceae</taxon>
        <taxon>Staphylococcus</taxon>
    </lineage>
</organism>
<dbReference type="EMBL" id="CP000703">
    <property type="protein sequence ID" value="ABQ49109.1"/>
    <property type="molecule type" value="Genomic_DNA"/>
</dbReference>
<dbReference type="RefSeq" id="WP_001015600.1">
    <property type="nucleotide sequence ID" value="NC_009487.1"/>
</dbReference>
<dbReference type="SMR" id="A5ISD6"/>
<dbReference type="KEGG" id="saj:SaurJH9_1312"/>
<dbReference type="HOGENOM" id="CLU_027562_9_0_9"/>
<dbReference type="GO" id="GO:0005737">
    <property type="term" value="C:cytoplasm"/>
    <property type="evidence" value="ECO:0007669"/>
    <property type="project" value="UniProtKB-SubCell"/>
</dbReference>
<dbReference type="GO" id="GO:0003677">
    <property type="term" value="F:DNA binding"/>
    <property type="evidence" value="ECO:0007669"/>
    <property type="project" value="UniProtKB-KW"/>
</dbReference>
<dbReference type="GO" id="GO:0009037">
    <property type="term" value="F:tyrosine-based site-specific recombinase activity"/>
    <property type="evidence" value="ECO:0007669"/>
    <property type="project" value="UniProtKB-UniRule"/>
</dbReference>
<dbReference type="GO" id="GO:0051301">
    <property type="term" value="P:cell division"/>
    <property type="evidence" value="ECO:0007669"/>
    <property type="project" value="UniProtKB-KW"/>
</dbReference>
<dbReference type="GO" id="GO:0007059">
    <property type="term" value="P:chromosome segregation"/>
    <property type="evidence" value="ECO:0007669"/>
    <property type="project" value="UniProtKB-UniRule"/>
</dbReference>
<dbReference type="GO" id="GO:0006313">
    <property type="term" value="P:DNA transposition"/>
    <property type="evidence" value="ECO:0007669"/>
    <property type="project" value="UniProtKB-UniRule"/>
</dbReference>
<dbReference type="CDD" id="cd00798">
    <property type="entry name" value="INT_XerDC_C"/>
    <property type="match status" value="1"/>
</dbReference>
<dbReference type="Gene3D" id="1.10.150.130">
    <property type="match status" value="1"/>
</dbReference>
<dbReference type="Gene3D" id="1.10.443.10">
    <property type="entry name" value="Intergrase catalytic core"/>
    <property type="match status" value="1"/>
</dbReference>
<dbReference type="HAMAP" id="MF_01808">
    <property type="entry name" value="Recomb_XerC_XerD"/>
    <property type="match status" value="1"/>
</dbReference>
<dbReference type="InterPro" id="IPR044068">
    <property type="entry name" value="CB"/>
</dbReference>
<dbReference type="InterPro" id="IPR011010">
    <property type="entry name" value="DNA_brk_join_enz"/>
</dbReference>
<dbReference type="InterPro" id="IPR013762">
    <property type="entry name" value="Integrase-like_cat_sf"/>
</dbReference>
<dbReference type="InterPro" id="IPR002104">
    <property type="entry name" value="Integrase_catalytic"/>
</dbReference>
<dbReference type="InterPro" id="IPR010998">
    <property type="entry name" value="Integrase_recombinase_N"/>
</dbReference>
<dbReference type="InterPro" id="IPR004107">
    <property type="entry name" value="Integrase_SAM-like_N"/>
</dbReference>
<dbReference type="InterPro" id="IPR011931">
    <property type="entry name" value="Recomb_XerC"/>
</dbReference>
<dbReference type="InterPro" id="IPR023009">
    <property type="entry name" value="Tyrosine_recombinase_XerC/XerD"/>
</dbReference>
<dbReference type="InterPro" id="IPR050090">
    <property type="entry name" value="Tyrosine_recombinase_XerCD"/>
</dbReference>
<dbReference type="NCBIfam" id="NF001399">
    <property type="entry name" value="PRK00283.1"/>
    <property type="match status" value="1"/>
</dbReference>
<dbReference type="NCBIfam" id="NF040815">
    <property type="entry name" value="recomb_XerA_Arch"/>
    <property type="match status" value="1"/>
</dbReference>
<dbReference type="NCBIfam" id="TIGR02224">
    <property type="entry name" value="recomb_XerC"/>
    <property type="match status" value="1"/>
</dbReference>
<dbReference type="PANTHER" id="PTHR30349">
    <property type="entry name" value="PHAGE INTEGRASE-RELATED"/>
    <property type="match status" value="1"/>
</dbReference>
<dbReference type="PANTHER" id="PTHR30349:SF77">
    <property type="entry name" value="TYROSINE RECOMBINASE XERC"/>
    <property type="match status" value="1"/>
</dbReference>
<dbReference type="Pfam" id="PF02899">
    <property type="entry name" value="Phage_int_SAM_1"/>
    <property type="match status" value="1"/>
</dbReference>
<dbReference type="Pfam" id="PF00589">
    <property type="entry name" value="Phage_integrase"/>
    <property type="match status" value="1"/>
</dbReference>
<dbReference type="SUPFAM" id="SSF56349">
    <property type="entry name" value="DNA breaking-rejoining enzymes"/>
    <property type="match status" value="1"/>
</dbReference>
<dbReference type="PROSITE" id="PS51900">
    <property type="entry name" value="CB"/>
    <property type="match status" value="1"/>
</dbReference>
<dbReference type="PROSITE" id="PS51898">
    <property type="entry name" value="TYR_RECOMBINASE"/>
    <property type="match status" value="1"/>
</dbReference>
<keyword id="KW-0131">Cell cycle</keyword>
<keyword id="KW-0132">Cell division</keyword>
<keyword id="KW-0159">Chromosome partition</keyword>
<keyword id="KW-0963">Cytoplasm</keyword>
<keyword id="KW-0229">DNA integration</keyword>
<keyword id="KW-0233">DNA recombination</keyword>
<keyword id="KW-0238">DNA-binding</keyword>
<protein>
    <recommendedName>
        <fullName evidence="1">Tyrosine recombinase XerC</fullName>
    </recommendedName>
</protein>
<evidence type="ECO:0000255" key="1">
    <source>
        <dbReference type="HAMAP-Rule" id="MF_01808"/>
    </source>
</evidence>
<evidence type="ECO:0000255" key="2">
    <source>
        <dbReference type="PROSITE-ProRule" id="PRU01246"/>
    </source>
</evidence>
<evidence type="ECO:0000255" key="3">
    <source>
        <dbReference type="PROSITE-ProRule" id="PRU01248"/>
    </source>
</evidence>
<feature type="chain" id="PRO_1000088245" description="Tyrosine recombinase XerC">
    <location>
        <begin position="1"/>
        <end position="298"/>
    </location>
</feature>
<feature type="domain" description="Core-binding (CB)" evidence="3">
    <location>
        <begin position="1"/>
        <end position="84"/>
    </location>
</feature>
<feature type="domain" description="Tyr recombinase" evidence="2">
    <location>
        <begin position="105"/>
        <end position="286"/>
    </location>
</feature>
<feature type="active site" evidence="1">
    <location>
        <position position="145"/>
    </location>
</feature>
<feature type="active site" evidence="1">
    <location>
        <position position="169"/>
    </location>
</feature>
<feature type="active site" evidence="1">
    <location>
        <position position="238"/>
    </location>
</feature>
<feature type="active site" evidence="1">
    <location>
        <position position="241"/>
    </location>
</feature>
<feature type="active site" evidence="1">
    <location>
        <position position="264"/>
    </location>
</feature>
<feature type="active site" description="O-(3'-phospho-DNA)-tyrosine intermediate" evidence="1">
    <location>
        <position position="273"/>
    </location>
</feature>